<proteinExistence type="inferred from homology"/>
<feature type="chain" id="PRO_1000136877" description="Diphthine synthase">
    <location>
        <begin position="1"/>
        <end position="253"/>
    </location>
</feature>
<feature type="binding site" evidence="1">
    <location>
        <position position="83"/>
    </location>
    <ligand>
        <name>S-adenosyl-L-methionine</name>
        <dbReference type="ChEBI" id="CHEBI:59789"/>
    </ligand>
</feature>
<feature type="binding site" evidence="1">
    <location>
        <position position="86"/>
    </location>
    <ligand>
        <name>S-adenosyl-L-methionine</name>
        <dbReference type="ChEBI" id="CHEBI:59789"/>
    </ligand>
</feature>
<feature type="binding site" evidence="1">
    <location>
        <begin position="111"/>
        <end position="112"/>
    </location>
    <ligand>
        <name>S-adenosyl-L-methionine</name>
        <dbReference type="ChEBI" id="CHEBI:59789"/>
    </ligand>
</feature>
<feature type="binding site" evidence="1">
    <location>
        <position position="163"/>
    </location>
    <ligand>
        <name>S-adenosyl-L-methionine</name>
        <dbReference type="ChEBI" id="CHEBI:59789"/>
    </ligand>
</feature>
<feature type="binding site" evidence="1">
    <location>
        <position position="205"/>
    </location>
    <ligand>
        <name>S-adenosyl-L-methionine</name>
        <dbReference type="ChEBI" id="CHEBI:59789"/>
    </ligand>
</feature>
<name>DPHB_PYRNV</name>
<dbReference type="EC" id="2.1.1.98" evidence="1"/>
<dbReference type="EMBL" id="CP001014">
    <property type="protein sequence ID" value="ACB39171.1"/>
    <property type="molecule type" value="Genomic_DNA"/>
</dbReference>
<dbReference type="RefSeq" id="WP_012349592.1">
    <property type="nucleotide sequence ID" value="NC_010525.1"/>
</dbReference>
<dbReference type="SMR" id="B1YAU2"/>
<dbReference type="STRING" id="444157.Tneu_0216"/>
<dbReference type="GeneID" id="6164789"/>
<dbReference type="KEGG" id="tne:Tneu_0216"/>
<dbReference type="eggNOG" id="arCOG04161">
    <property type="taxonomic scope" value="Archaea"/>
</dbReference>
<dbReference type="HOGENOM" id="CLU_066040_0_0_2"/>
<dbReference type="OrthoDB" id="39139at2157"/>
<dbReference type="UniPathway" id="UPA00559"/>
<dbReference type="Proteomes" id="UP000001694">
    <property type="component" value="Chromosome"/>
</dbReference>
<dbReference type="GO" id="GO:0004164">
    <property type="term" value="F:diphthine synthase activity"/>
    <property type="evidence" value="ECO:0007669"/>
    <property type="project" value="UniProtKB-UniRule"/>
</dbReference>
<dbReference type="GO" id="GO:0032259">
    <property type="term" value="P:methylation"/>
    <property type="evidence" value="ECO:0007669"/>
    <property type="project" value="UniProtKB-KW"/>
</dbReference>
<dbReference type="GO" id="GO:0017183">
    <property type="term" value="P:protein histidyl modification to diphthamide"/>
    <property type="evidence" value="ECO:0007669"/>
    <property type="project" value="UniProtKB-UniRule"/>
</dbReference>
<dbReference type="CDD" id="cd11647">
    <property type="entry name" value="DHP5_DphB"/>
    <property type="match status" value="1"/>
</dbReference>
<dbReference type="Gene3D" id="3.40.1010.10">
    <property type="entry name" value="Cobalt-precorrin-4 Transmethylase, Domain 1"/>
    <property type="match status" value="1"/>
</dbReference>
<dbReference type="Gene3D" id="3.30.950.10">
    <property type="entry name" value="Methyltransferase, Cobalt-precorrin-4 Transmethylase, Domain 2"/>
    <property type="match status" value="1"/>
</dbReference>
<dbReference type="HAMAP" id="MF_01084">
    <property type="entry name" value="Diphthine_synth"/>
    <property type="match status" value="1"/>
</dbReference>
<dbReference type="InterPro" id="IPR000878">
    <property type="entry name" value="4pyrrol_Mease"/>
</dbReference>
<dbReference type="InterPro" id="IPR035996">
    <property type="entry name" value="4pyrrol_Methylase_sf"/>
</dbReference>
<dbReference type="InterPro" id="IPR014777">
    <property type="entry name" value="4pyrrole_Mease_sub1"/>
</dbReference>
<dbReference type="InterPro" id="IPR014776">
    <property type="entry name" value="4pyrrole_Mease_sub2"/>
</dbReference>
<dbReference type="InterPro" id="IPR004551">
    <property type="entry name" value="Dphthn_synthase"/>
</dbReference>
<dbReference type="PANTHER" id="PTHR10882:SF0">
    <property type="entry name" value="DIPHTHINE METHYL ESTER SYNTHASE"/>
    <property type="match status" value="1"/>
</dbReference>
<dbReference type="PANTHER" id="PTHR10882">
    <property type="entry name" value="DIPHTHINE SYNTHASE"/>
    <property type="match status" value="1"/>
</dbReference>
<dbReference type="Pfam" id="PF00590">
    <property type="entry name" value="TP_methylase"/>
    <property type="match status" value="1"/>
</dbReference>
<dbReference type="PIRSF" id="PIRSF036432">
    <property type="entry name" value="Diphthine_synth"/>
    <property type="match status" value="1"/>
</dbReference>
<dbReference type="SUPFAM" id="SSF53790">
    <property type="entry name" value="Tetrapyrrole methylase"/>
    <property type="match status" value="1"/>
</dbReference>
<protein>
    <recommendedName>
        <fullName evidence="1">Diphthine synthase</fullName>
        <ecNumber evidence="1">2.1.1.98</ecNumber>
    </recommendedName>
    <alternativeName>
        <fullName evidence="1">Diphthamide biosynthesis methyltransferase</fullName>
    </alternativeName>
</protein>
<reference key="1">
    <citation type="submission" date="2008-03" db="EMBL/GenBank/DDBJ databases">
        <title>Complete sequence of Thermoproteus neutrophilus V24Sta.</title>
        <authorList>
            <consortium name="US DOE Joint Genome Institute"/>
            <person name="Copeland A."/>
            <person name="Lucas S."/>
            <person name="Lapidus A."/>
            <person name="Glavina del Rio T."/>
            <person name="Dalin E."/>
            <person name="Tice H."/>
            <person name="Bruce D."/>
            <person name="Goodwin L."/>
            <person name="Pitluck S."/>
            <person name="Sims D."/>
            <person name="Brettin T."/>
            <person name="Detter J.C."/>
            <person name="Han C."/>
            <person name="Kuske C.R."/>
            <person name="Schmutz J."/>
            <person name="Larimer F."/>
            <person name="Land M."/>
            <person name="Hauser L."/>
            <person name="Kyrpides N."/>
            <person name="Mikhailova N."/>
            <person name="Biddle J.F."/>
            <person name="Zhang Z."/>
            <person name="Fitz-Gibbon S.T."/>
            <person name="Lowe T.M."/>
            <person name="Saltikov C."/>
            <person name="House C.H."/>
            <person name="Richardson P."/>
        </authorList>
    </citation>
    <scope>NUCLEOTIDE SEQUENCE [LARGE SCALE GENOMIC DNA]</scope>
    <source>
        <strain>DSM 2338 / JCM 9278 / NBRC 100436 / V24Sta</strain>
    </source>
</reference>
<sequence>MFYIIGVGPAPGFITEKAAQILREADCVFYEDYTGPIDVETLRRYARSPPTRLTRRDLEDESGRRVLECLSRGKTAVLATAGDPMLATSHAALISIARSRGYSVEVVPGVSIVCAAFSASCLSIYKLGGVATVTYPRGGVYSARPYELVEQNLARGLHTLLLLDVREDGVFMPPRDAAEIMLKLEEREKRGVFDKGRPVVVVPKLGWGGRPAYLPLGELLGSDLEGPAVFIVPGGLSPVERECIEALSVLKSR</sequence>
<keyword id="KW-0489">Methyltransferase</keyword>
<keyword id="KW-0949">S-adenosyl-L-methionine</keyword>
<keyword id="KW-0808">Transferase</keyword>
<evidence type="ECO:0000255" key="1">
    <source>
        <dbReference type="HAMAP-Rule" id="MF_01084"/>
    </source>
</evidence>
<accession>B1YAU2</accession>
<organism>
    <name type="scientific">Pyrobaculum neutrophilum (strain DSM 2338 / JCM 9278 / NBRC 100436 / V24Sta)</name>
    <name type="common">Thermoproteus neutrophilus</name>
    <dbReference type="NCBI Taxonomy" id="444157"/>
    <lineage>
        <taxon>Archaea</taxon>
        <taxon>Thermoproteota</taxon>
        <taxon>Thermoprotei</taxon>
        <taxon>Thermoproteales</taxon>
        <taxon>Thermoproteaceae</taxon>
        <taxon>Pyrobaculum</taxon>
    </lineage>
</organism>
<comment type="function">
    <text evidence="1">S-adenosyl-L-methionine-dependent methyltransferase that catalyzes the trimethylation of the amino group of the modified target histidine residue in translation elongation factor 2 (EF-2), to form an intermediate called diphthine. The three successive methylation reactions represent the second step of diphthamide biosynthesis.</text>
</comment>
<comment type="catalytic activity">
    <reaction evidence="1">
        <text>2-[(3S)-amino-3-carboxypropyl]-L-histidyl-[translation elongation factor 2] + 3 S-adenosyl-L-methionine = diphthine-[translation elongation factor 2] + 3 S-adenosyl-L-homocysteine + 3 H(+)</text>
        <dbReference type="Rhea" id="RHEA:36415"/>
        <dbReference type="Rhea" id="RHEA-COMP:9749"/>
        <dbReference type="Rhea" id="RHEA-COMP:10172"/>
        <dbReference type="ChEBI" id="CHEBI:15378"/>
        <dbReference type="ChEBI" id="CHEBI:57856"/>
        <dbReference type="ChEBI" id="CHEBI:59789"/>
        <dbReference type="ChEBI" id="CHEBI:73995"/>
        <dbReference type="ChEBI" id="CHEBI:82696"/>
        <dbReference type="EC" id="2.1.1.98"/>
    </reaction>
</comment>
<comment type="pathway">
    <text evidence="1">Protein modification; peptidyl-diphthamide biosynthesis.</text>
</comment>
<comment type="subunit">
    <text evidence="1">Homodimer.</text>
</comment>
<comment type="similarity">
    <text evidence="1">Belongs to the diphthine synthase family.</text>
</comment>
<gene>
    <name evidence="1" type="primary">dphB</name>
    <name type="ordered locus">Tneu_0216</name>
</gene>